<reference key="1">
    <citation type="submission" date="2007-08" db="EMBL/GenBank/DDBJ databases">
        <authorList>
            <consortium name="The Citrobacter koseri Genome Sequencing Project"/>
            <person name="McClelland M."/>
            <person name="Sanderson E.K."/>
            <person name="Porwollik S."/>
            <person name="Spieth J."/>
            <person name="Clifton W.S."/>
            <person name="Latreille P."/>
            <person name="Courtney L."/>
            <person name="Wang C."/>
            <person name="Pepin K."/>
            <person name="Bhonagiri V."/>
            <person name="Nash W."/>
            <person name="Johnson M."/>
            <person name="Thiruvilangam P."/>
            <person name="Wilson R."/>
        </authorList>
    </citation>
    <scope>NUCLEOTIDE SEQUENCE [LARGE SCALE GENOMIC DNA]</scope>
    <source>
        <strain>ATCC BAA-895 / CDC 4225-83 / SGSC4696</strain>
    </source>
</reference>
<feature type="chain" id="PRO_1000013898" description="Ubiquinone biosynthesis O-methyltransferase">
    <location>
        <begin position="1"/>
        <end position="242"/>
    </location>
</feature>
<feature type="binding site" evidence="1">
    <location>
        <position position="44"/>
    </location>
    <ligand>
        <name>S-adenosyl-L-methionine</name>
        <dbReference type="ChEBI" id="CHEBI:59789"/>
    </ligand>
</feature>
<feature type="binding site" evidence="1">
    <location>
        <position position="64"/>
    </location>
    <ligand>
        <name>S-adenosyl-L-methionine</name>
        <dbReference type="ChEBI" id="CHEBI:59789"/>
    </ligand>
</feature>
<feature type="binding site" evidence="1">
    <location>
        <position position="85"/>
    </location>
    <ligand>
        <name>S-adenosyl-L-methionine</name>
        <dbReference type="ChEBI" id="CHEBI:59789"/>
    </ligand>
</feature>
<feature type="binding site" evidence="1">
    <location>
        <position position="129"/>
    </location>
    <ligand>
        <name>S-adenosyl-L-methionine</name>
        <dbReference type="ChEBI" id="CHEBI:59789"/>
    </ligand>
</feature>
<sequence>MNAEKPPVTHNVDHEEIAKFEAVASRWWDLEGEFKPLHRINPLRLGYIAERSGGLFGKKVLDVGCGGGILAESMAREGATVTGLDMGFEPLQVAKLHALESGIQVDYVQETVEEHAAKHAHQYDVVTCMEMLEHVPDPQSVVRACAQLVKPGGEVFFSTLNRNGKSWLMAVVGAEYILRMVPKGTHDVKKFIKPAELLNWVDQTVLKERHMTGLHYNPITNTFKLGPGVDVNYMVHTTAQVD</sequence>
<evidence type="ECO:0000255" key="1">
    <source>
        <dbReference type="HAMAP-Rule" id="MF_00472"/>
    </source>
</evidence>
<gene>
    <name evidence="1" type="primary">ubiG</name>
    <name type="ordered locus">CKO_00542</name>
</gene>
<dbReference type="EC" id="2.1.1.222" evidence="1"/>
<dbReference type="EC" id="2.1.1.64" evidence="1"/>
<dbReference type="EMBL" id="CP000822">
    <property type="protein sequence ID" value="ABV11698.1"/>
    <property type="molecule type" value="Genomic_DNA"/>
</dbReference>
<dbReference type="RefSeq" id="WP_012131523.1">
    <property type="nucleotide sequence ID" value="NC_009792.1"/>
</dbReference>
<dbReference type="SMR" id="A8ADY5"/>
<dbReference type="STRING" id="290338.CKO_00542"/>
<dbReference type="GeneID" id="45134784"/>
<dbReference type="KEGG" id="cko:CKO_00542"/>
<dbReference type="HOGENOM" id="CLU_042432_5_0_6"/>
<dbReference type="OrthoDB" id="9801538at2"/>
<dbReference type="UniPathway" id="UPA00232"/>
<dbReference type="Proteomes" id="UP000008148">
    <property type="component" value="Chromosome"/>
</dbReference>
<dbReference type="GO" id="GO:0102208">
    <property type="term" value="F:2-polyprenyl-6-hydroxyphenol methylase activity"/>
    <property type="evidence" value="ECO:0007669"/>
    <property type="project" value="UniProtKB-EC"/>
</dbReference>
<dbReference type="GO" id="GO:0061542">
    <property type="term" value="F:3-demethylubiquinol 3-O-methyltransferase activity"/>
    <property type="evidence" value="ECO:0007669"/>
    <property type="project" value="UniProtKB-UniRule"/>
</dbReference>
<dbReference type="GO" id="GO:0010420">
    <property type="term" value="F:polyprenyldihydroxybenzoate methyltransferase activity"/>
    <property type="evidence" value="ECO:0007669"/>
    <property type="project" value="InterPro"/>
</dbReference>
<dbReference type="GO" id="GO:0032259">
    <property type="term" value="P:methylation"/>
    <property type="evidence" value="ECO:0007669"/>
    <property type="project" value="UniProtKB-KW"/>
</dbReference>
<dbReference type="CDD" id="cd02440">
    <property type="entry name" value="AdoMet_MTases"/>
    <property type="match status" value="1"/>
</dbReference>
<dbReference type="FunFam" id="3.40.50.150:FF:000028">
    <property type="entry name" value="Ubiquinone biosynthesis O-methyltransferase"/>
    <property type="match status" value="1"/>
</dbReference>
<dbReference type="Gene3D" id="3.40.50.150">
    <property type="entry name" value="Vaccinia Virus protein VP39"/>
    <property type="match status" value="1"/>
</dbReference>
<dbReference type="HAMAP" id="MF_00472">
    <property type="entry name" value="UbiG"/>
    <property type="match status" value="1"/>
</dbReference>
<dbReference type="InterPro" id="IPR029063">
    <property type="entry name" value="SAM-dependent_MTases_sf"/>
</dbReference>
<dbReference type="InterPro" id="IPR010233">
    <property type="entry name" value="UbiG_MeTrfase"/>
</dbReference>
<dbReference type="NCBIfam" id="TIGR01983">
    <property type="entry name" value="UbiG"/>
    <property type="match status" value="1"/>
</dbReference>
<dbReference type="PANTHER" id="PTHR43464">
    <property type="entry name" value="METHYLTRANSFERASE"/>
    <property type="match status" value="1"/>
</dbReference>
<dbReference type="PANTHER" id="PTHR43464:SF19">
    <property type="entry name" value="UBIQUINONE BIOSYNTHESIS O-METHYLTRANSFERASE, MITOCHONDRIAL"/>
    <property type="match status" value="1"/>
</dbReference>
<dbReference type="Pfam" id="PF13489">
    <property type="entry name" value="Methyltransf_23"/>
    <property type="match status" value="1"/>
</dbReference>
<dbReference type="SUPFAM" id="SSF53335">
    <property type="entry name" value="S-adenosyl-L-methionine-dependent methyltransferases"/>
    <property type="match status" value="1"/>
</dbReference>
<keyword id="KW-0489">Methyltransferase</keyword>
<keyword id="KW-1185">Reference proteome</keyword>
<keyword id="KW-0949">S-adenosyl-L-methionine</keyword>
<keyword id="KW-0808">Transferase</keyword>
<keyword id="KW-0831">Ubiquinone biosynthesis</keyword>
<protein>
    <recommendedName>
        <fullName evidence="1">Ubiquinone biosynthesis O-methyltransferase</fullName>
    </recommendedName>
    <alternativeName>
        <fullName evidence="1">2-polyprenyl-6-hydroxyphenol methylase</fullName>
        <ecNumber evidence="1">2.1.1.222</ecNumber>
    </alternativeName>
    <alternativeName>
        <fullName evidence="1">3-demethylubiquinone 3-O-methyltransferase</fullName>
        <ecNumber evidence="1">2.1.1.64</ecNumber>
    </alternativeName>
</protein>
<proteinExistence type="inferred from homology"/>
<accession>A8ADY5</accession>
<comment type="function">
    <text evidence="1">O-methyltransferase that catalyzes the 2 O-methylation steps in the ubiquinone biosynthetic pathway.</text>
</comment>
<comment type="catalytic activity">
    <reaction evidence="1">
        <text>a 3-demethylubiquinol + S-adenosyl-L-methionine = a ubiquinol + S-adenosyl-L-homocysteine + H(+)</text>
        <dbReference type="Rhea" id="RHEA:44380"/>
        <dbReference type="Rhea" id="RHEA-COMP:9566"/>
        <dbReference type="Rhea" id="RHEA-COMP:10914"/>
        <dbReference type="ChEBI" id="CHEBI:15378"/>
        <dbReference type="ChEBI" id="CHEBI:17976"/>
        <dbReference type="ChEBI" id="CHEBI:57856"/>
        <dbReference type="ChEBI" id="CHEBI:59789"/>
        <dbReference type="ChEBI" id="CHEBI:84422"/>
        <dbReference type="EC" id="2.1.1.64"/>
    </reaction>
</comment>
<comment type="catalytic activity">
    <reaction evidence="1">
        <text>a 3-(all-trans-polyprenyl)benzene-1,2-diol + S-adenosyl-L-methionine = a 2-methoxy-6-(all-trans-polyprenyl)phenol + S-adenosyl-L-homocysteine + H(+)</text>
        <dbReference type="Rhea" id="RHEA:31411"/>
        <dbReference type="Rhea" id="RHEA-COMP:9550"/>
        <dbReference type="Rhea" id="RHEA-COMP:9551"/>
        <dbReference type="ChEBI" id="CHEBI:15378"/>
        <dbReference type="ChEBI" id="CHEBI:57856"/>
        <dbReference type="ChEBI" id="CHEBI:59789"/>
        <dbReference type="ChEBI" id="CHEBI:62729"/>
        <dbReference type="ChEBI" id="CHEBI:62731"/>
        <dbReference type="EC" id="2.1.1.222"/>
    </reaction>
</comment>
<comment type="pathway">
    <text evidence="1">Cofactor biosynthesis; ubiquinone biosynthesis.</text>
</comment>
<comment type="similarity">
    <text evidence="1">Belongs to the methyltransferase superfamily. UbiG/COQ3 family.</text>
</comment>
<name>UBIG_CITK8</name>
<organism>
    <name type="scientific">Citrobacter koseri (strain ATCC BAA-895 / CDC 4225-83 / SGSC4696)</name>
    <dbReference type="NCBI Taxonomy" id="290338"/>
    <lineage>
        <taxon>Bacteria</taxon>
        <taxon>Pseudomonadati</taxon>
        <taxon>Pseudomonadota</taxon>
        <taxon>Gammaproteobacteria</taxon>
        <taxon>Enterobacterales</taxon>
        <taxon>Enterobacteriaceae</taxon>
        <taxon>Citrobacter</taxon>
    </lineage>
</organism>